<reference key="1">
    <citation type="journal article" date="1995" name="Plant Physiol.">
        <title>The genomic region of rbcLS in Synechococcus sp. PCC 7942 contains genes involved in the ability to grow under low CO2 concentration and in chlorophyll biosynthesis.</title>
        <authorList>
            <person name="Ronen-Tarazi M."/>
            <person name="Lieman-Hurwitz J."/>
            <person name="Gabay C."/>
            <person name="Orus M.I."/>
            <person name="Kaplan A."/>
        </authorList>
    </citation>
    <scope>NUCLEOTIDE SEQUENCE [GENOMIC DNA]</scope>
</reference>
<reference key="2">
    <citation type="submission" date="2005-08" db="EMBL/GenBank/DDBJ databases">
        <title>Complete sequence of chromosome 1 of Synechococcus elongatus PCC 7942.</title>
        <authorList>
            <consortium name="US DOE Joint Genome Institute"/>
            <person name="Copeland A."/>
            <person name="Lucas S."/>
            <person name="Lapidus A."/>
            <person name="Barry K."/>
            <person name="Detter J.C."/>
            <person name="Glavina T."/>
            <person name="Hammon N."/>
            <person name="Israni S."/>
            <person name="Pitluck S."/>
            <person name="Schmutz J."/>
            <person name="Larimer F."/>
            <person name="Land M."/>
            <person name="Kyrpides N."/>
            <person name="Lykidis A."/>
            <person name="Golden S."/>
            <person name="Richardson P."/>
        </authorList>
    </citation>
    <scope>NUCLEOTIDE SEQUENCE [LARGE SCALE GENOMIC DNA]</scope>
    <source>
        <strain>ATCC 33912 / PCC 7942 / FACHB-805</strain>
    </source>
</reference>
<keyword id="KW-0004">4Fe-4S</keyword>
<keyword id="KW-0067">ATP-binding</keyword>
<keyword id="KW-0149">Chlorophyll biosynthesis</keyword>
<keyword id="KW-0408">Iron</keyword>
<keyword id="KW-0411">Iron-sulfur</keyword>
<keyword id="KW-0479">Metal-binding</keyword>
<keyword id="KW-0547">Nucleotide-binding</keyword>
<keyword id="KW-0560">Oxidoreductase</keyword>
<keyword id="KW-0602">Photosynthesis</keyword>
<keyword id="KW-1185">Reference proteome</keyword>
<comment type="function">
    <text evidence="1">Component of the dark-operative protochlorophyllide reductase (DPOR) that uses Mg-ATP and reduced ferredoxin to reduce ring D of protochlorophyllide (Pchlide) to form chlorophyllide a (Chlide). This reaction is light-independent. The NB-protein (ChlN-ChlB) is the catalytic component of the complex.</text>
</comment>
<comment type="catalytic activity">
    <reaction evidence="1">
        <text>chlorophyllide a + oxidized 2[4Fe-4S]-[ferredoxin] + 2 ADP + 2 phosphate = protochlorophyllide a + reduced 2[4Fe-4S]-[ferredoxin] + 2 ATP + 2 H2O</text>
        <dbReference type="Rhea" id="RHEA:28202"/>
        <dbReference type="Rhea" id="RHEA-COMP:10002"/>
        <dbReference type="Rhea" id="RHEA-COMP:10004"/>
        <dbReference type="ChEBI" id="CHEBI:15377"/>
        <dbReference type="ChEBI" id="CHEBI:30616"/>
        <dbReference type="ChEBI" id="CHEBI:33722"/>
        <dbReference type="ChEBI" id="CHEBI:33723"/>
        <dbReference type="ChEBI" id="CHEBI:43474"/>
        <dbReference type="ChEBI" id="CHEBI:83348"/>
        <dbReference type="ChEBI" id="CHEBI:83350"/>
        <dbReference type="ChEBI" id="CHEBI:456216"/>
        <dbReference type="EC" id="1.3.7.7"/>
    </reaction>
</comment>
<comment type="cofactor">
    <cofactor evidence="1">
        <name>[4Fe-4S] cluster</name>
        <dbReference type="ChEBI" id="CHEBI:49883"/>
    </cofactor>
    <text evidence="1">Binds 1 [4Fe-4S] cluster per heterodimer. The cluster is bound at the heterodimer interface by residues from both subunits.</text>
</comment>
<comment type="pathway">
    <text evidence="1">Porphyrin-containing compound metabolism; chlorophyll biosynthesis (light-independent).</text>
</comment>
<comment type="subunit">
    <text evidence="1">Protochlorophyllide reductase is composed of three subunits; ChlL, ChlN and ChlB. Forms a heterotetramer of two ChlB and two ChlN subunits.</text>
</comment>
<comment type="similarity">
    <text evidence="1">Belongs to the BchN/ChlN family.</text>
</comment>
<protein>
    <recommendedName>
        <fullName evidence="1">Light-independent protochlorophyllide reductase subunit N</fullName>
        <shortName evidence="1">DPOR subunit N</shortName>
        <shortName evidence="1">LI-POR subunit N</shortName>
        <ecNumber evidence="1">1.3.7.7</ecNumber>
    </recommendedName>
</protein>
<evidence type="ECO:0000255" key="1">
    <source>
        <dbReference type="HAMAP-Rule" id="MF_00352"/>
    </source>
</evidence>
<sequence>MTTTEAPSALSFECETGNYHTFCPISCVAWLYQKIEDSFFLVIGTKTCGYFLQNAMGVMIFAEPRYAMAELEEGDISAQLNDYAELKRLCTQIKRDRNPSVIVWIGTCTTEIIKMDLEGLAPKLEAEIGIPIVVARANGLDYAFTQGEDTVLAAMAARCPEAATSEADQQERTNAIQRLLQFGKSPAAEQQPASSKHPPLILFGSVPDPVATQLTIELAKQGITVSGWLPAKRYTELPVIAEGSYAIGLNPFLSRTATTLMRRRKCKVIGAPFPIGPDGSRAWIEKICSVLEIEPQGLAEREAQVWDSIEDYRQLVEGKQVFFMGDNLWEISLARFLVRCGMRCPEIGIPYLDRRYLGAELAMLEATCQSMGVPLPRLVEKPDNYNQLQRIEALQPDLVITGMAHANPLEARGISTKWSVEFTFAQIHGFGNARAILELVTRPLRRNLALGTLGGSQWVSEAVTSR</sequence>
<gene>
    <name evidence="1" type="primary">chlN</name>
    <name type="synonym">frxC</name>
    <name type="ordered locus">Synpcc7942_1420</name>
</gene>
<organism>
    <name type="scientific">Synechococcus elongatus (strain ATCC 33912 / PCC 7942 / FACHB-805)</name>
    <name type="common">Anacystis nidulans R2</name>
    <dbReference type="NCBI Taxonomy" id="1140"/>
    <lineage>
        <taxon>Bacteria</taxon>
        <taxon>Bacillati</taxon>
        <taxon>Cyanobacteriota</taxon>
        <taxon>Cyanophyceae</taxon>
        <taxon>Synechococcales</taxon>
        <taxon>Synechococcaceae</taxon>
        <taxon>Synechococcus</taxon>
    </lineage>
</organism>
<feature type="chain" id="PRO_0000208604" description="Light-independent protochlorophyllide reductase subunit N">
    <location>
        <begin position="1"/>
        <end position="466"/>
    </location>
</feature>
<feature type="binding site" evidence="1">
    <location>
        <position position="23"/>
    </location>
    <ligand>
        <name>[4Fe-4S] cluster</name>
        <dbReference type="ChEBI" id="CHEBI:49883"/>
        <note>ligand shared with heterodimeric partner</note>
    </ligand>
</feature>
<feature type="binding site" evidence="1">
    <location>
        <position position="48"/>
    </location>
    <ligand>
        <name>[4Fe-4S] cluster</name>
        <dbReference type="ChEBI" id="CHEBI:49883"/>
        <note>ligand shared with heterodimeric partner</note>
    </ligand>
</feature>
<feature type="binding site" evidence="1">
    <location>
        <position position="108"/>
    </location>
    <ligand>
        <name>[4Fe-4S] cluster</name>
        <dbReference type="ChEBI" id="CHEBI:49883"/>
        <note>ligand shared with heterodimeric partner</note>
    </ligand>
</feature>
<dbReference type="EC" id="1.3.7.7" evidence="1"/>
<dbReference type="EMBL" id="X67694">
    <property type="protein sequence ID" value="CAA47924.1"/>
    <property type="molecule type" value="Genomic_DNA"/>
</dbReference>
<dbReference type="EMBL" id="CP000100">
    <property type="protein sequence ID" value="ABB57450.1"/>
    <property type="molecule type" value="Genomic_DNA"/>
</dbReference>
<dbReference type="RefSeq" id="WP_011378028.1">
    <property type="nucleotide sequence ID" value="NZ_JACJTX010000004.1"/>
</dbReference>
<dbReference type="SMR" id="P54208"/>
<dbReference type="STRING" id="1140.Synpcc7942_1420"/>
<dbReference type="PaxDb" id="1140-Synpcc7942_1420"/>
<dbReference type="KEGG" id="syf:Synpcc7942_1420"/>
<dbReference type="eggNOG" id="COG2710">
    <property type="taxonomic scope" value="Bacteria"/>
</dbReference>
<dbReference type="HOGENOM" id="CLU_037170_0_0_3"/>
<dbReference type="OrthoDB" id="5714774at2"/>
<dbReference type="BioCyc" id="SYNEL:SYNPCC7942_1420-MONOMER"/>
<dbReference type="UniPathway" id="UPA00670"/>
<dbReference type="Proteomes" id="UP000889800">
    <property type="component" value="Chromosome"/>
</dbReference>
<dbReference type="GO" id="GO:0051539">
    <property type="term" value="F:4 iron, 4 sulfur cluster binding"/>
    <property type="evidence" value="ECO:0007669"/>
    <property type="project" value="UniProtKB-UniRule"/>
</dbReference>
<dbReference type="GO" id="GO:0005524">
    <property type="term" value="F:ATP binding"/>
    <property type="evidence" value="ECO:0007669"/>
    <property type="project" value="UniProtKB-UniRule"/>
</dbReference>
<dbReference type="GO" id="GO:0046872">
    <property type="term" value="F:metal ion binding"/>
    <property type="evidence" value="ECO:0007669"/>
    <property type="project" value="UniProtKB-KW"/>
</dbReference>
<dbReference type="GO" id="GO:0016730">
    <property type="term" value="F:oxidoreductase activity, acting on iron-sulfur proteins as donors"/>
    <property type="evidence" value="ECO:0007669"/>
    <property type="project" value="InterPro"/>
</dbReference>
<dbReference type="GO" id="GO:0016636">
    <property type="term" value="F:oxidoreductase activity, acting on the CH-CH group of donors, iron-sulfur protein as acceptor"/>
    <property type="evidence" value="ECO:0007669"/>
    <property type="project" value="UniProtKB-UniRule"/>
</dbReference>
<dbReference type="GO" id="GO:0036068">
    <property type="term" value="P:light-independent chlorophyll biosynthetic process"/>
    <property type="evidence" value="ECO:0007669"/>
    <property type="project" value="UniProtKB-UniRule"/>
</dbReference>
<dbReference type="GO" id="GO:0019685">
    <property type="term" value="P:photosynthesis, dark reaction"/>
    <property type="evidence" value="ECO:0007669"/>
    <property type="project" value="InterPro"/>
</dbReference>
<dbReference type="CDD" id="cd01979">
    <property type="entry name" value="Pchlide_reductase_N"/>
    <property type="match status" value="1"/>
</dbReference>
<dbReference type="Gene3D" id="3.40.50.1980">
    <property type="entry name" value="Nitrogenase molybdenum iron protein domain"/>
    <property type="match status" value="3"/>
</dbReference>
<dbReference type="HAMAP" id="MF_00352">
    <property type="entry name" value="ChlN_BchN"/>
    <property type="match status" value="1"/>
</dbReference>
<dbReference type="InterPro" id="IPR050293">
    <property type="entry name" value="LIPOR_BchN/ChlN"/>
</dbReference>
<dbReference type="InterPro" id="IPR000510">
    <property type="entry name" value="Nase/OxRdtase_comp1"/>
</dbReference>
<dbReference type="InterPro" id="IPR005970">
    <property type="entry name" value="Protochl_reductN"/>
</dbReference>
<dbReference type="NCBIfam" id="TIGR01279">
    <property type="entry name" value="DPOR_bchN"/>
    <property type="match status" value="1"/>
</dbReference>
<dbReference type="NCBIfam" id="NF002768">
    <property type="entry name" value="PRK02842.1"/>
    <property type="match status" value="1"/>
</dbReference>
<dbReference type="PANTHER" id="PTHR39429">
    <property type="entry name" value="LIGHT-INDEPENDENT PROTOCHLOROPHYLLIDE REDUCTASE SUBUNIT N"/>
    <property type="match status" value="1"/>
</dbReference>
<dbReference type="PANTHER" id="PTHR39429:SF3">
    <property type="entry name" value="LIGHT-INDEPENDENT PROTOCHLOROPHYLLIDE REDUCTASE SUBUNIT N"/>
    <property type="match status" value="1"/>
</dbReference>
<dbReference type="Pfam" id="PF00148">
    <property type="entry name" value="Oxidored_nitro"/>
    <property type="match status" value="1"/>
</dbReference>
<dbReference type="PIRSF" id="PIRSF000162">
    <property type="entry name" value="P_chlorophyll_rd"/>
    <property type="match status" value="1"/>
</dbReference>
<dbReference type="SUPFAM" id="SSF53807">
    <property type="entry name" value="Helical backbone' metal receptor"/>
    <property type="match status" value="1"/>
</dbReference>
<accession>P54208</accession>
<accession>Q31NB9</accession>
<name>CHLN_SYNE7</name>
<proteinExistence type="inferred from homology"/>